<proteinExistence type="inferred from homology"/>
<reference key="1">
    <citation type="submission" date="2006-08" db="EMBL/GenBank/DDBJ databases">
        <title>Complete sequence of chromosome 1 of Burkholderia cenocepacia HI2424.</title>
        <authorList>
            <person name="Copeland A."/>
            <person name="Lucas S."/>
            <person name="Lapidus A."/>
            <person name="Barry K."/>
            <person name="Detter J.C."/>
            <person name="Glavina del Rio T."/>
            <person name="Hammon N."/>
            <person name="Israni S."/>
            <person name="Pitluck S."/>
            <person name="Chain P."/>
            <person name="Malfatti S."/>
            <person name="Shin M."/>
            <person name="Vergez L."/>
            <person name="Schmutz J."/>
            <person name="Larimer F."/>
            <person name="Land M."/>
            <person name="Hauser L."/>
            <person name="Kyrpides N."/>
            <person name="Kim E."/>
            <person name="LiPuma J.J."/>
            <person name="Gonzalez C.F."/>
            <person name="Konstantinidis K."/>
            <person name="Tiedje J.M."/>
            <person name="Richardson P."/>
        </authorList>
    </citation>
    <scope>NUCLEOTIDE SEQUENCE [LARGE SCALE GENOMIC DNA]</scope>
    <source>
        <strain>HI2424</strain>
    </source>
</reference>
<sequence length="132" mass="15096">MSRKRTSPNRNVQIADQIQRDLSELIMREVKDPRIGIVTIQSVELTPDYAHAKVYFTALTGDPEKTQEALNHASGHLHNLLFKRLHIHTVPTLHFHYDQTIEKAVEMSRLIKEANSTRAKDDDEADTPAKDD</sequence>
<keyword id="KW-0963">Cytoplasm</keyword>
<keyword id="KW-0690">Ribosome biogenesis</keyword>
<feature type="chain" id="PRO_1000000081" description="Ribosome-binding factor A">
    <location>
        <begin position="1"/>
        <end position="132"/>
    </location>
</feature>
<feature type="region of interest" description="Disordered" evidence="2">
    <location>
        <begin position="113"/>
        <end position="132"/>
    </location>
</feature>
<dbReference type="EMBL" id="CP000458">
    <property type="protein sequence ID" value="ABK08253.1"/>
    <property type="molecule type" value="Genomic_DNA"/>
</dbReference>
<dbReference type="RefSeq" id="WP_011545262.1">
    <property type="nucleotide sequence ID" value="NC_008542.1"/>
</dbReference>
<dbReference type="SMR" id="A0K6X6"/>
<dbReference type="GeneID" id="83048273"/>
<dbReference type="KEGG" id="bch:Bcen2424_1501"/>
<dbReference type="HOGENOM" id="CLU_089475_5_1_4"/>
<dbReference type="GO" id="GO:0005829">
    <property type="term" value="C:cytosol"/>
    <property type="evidence" value="ECO:0007669"/>
    <property type="project" value="TreeGrafter"/>
</dbReference>
<dbReference type="GO" id="GO:0043024">
    <property type="term" value="F:ribosomal small subunit binding"/>
    <property type="evidence" value="ECO:0007669"/>
    <property type="project" value="TreeGrafter"/>
</dbReference>
<dbReference type="GO" id="GO:0030490">
    <property type="term" value="P:maturation of SSU-rRNA"/>
    <property type="evidence" value="ECO:0007669"/>
    <property type="project" value="UniProtKB-UniRule"/>
</dbReference>
<dbReference type="Gene3D" id="3.30.300.20">
    <property type="match status" value="1"/>
</dbReference>
<dbReference type="HAMAP" id="MF_00003">
    <property type="entry name" value="RbfA"/>
    <property type="match status" value="1"/>
</dbReference>
<dbReference type="InterPro" id="IPR015946">
    <property type="entry name" value="KH_dom-like_a/b"/>
</dbReference>
<dbReference type="InterPro" id="IPR000238">
    <property type="entry name" value="RbfA"/>
</dbReference>
<dbReference type="InterPro" id="IPR023799">
    <property type="entry name" value="RbfA_dom_sf"/>
</dbReference>
<dbReference type="NCBIfam" id="TIGR00082">
    <property type="entry name" value="rbfA"/>
    <property type="match status" value="1"/>
</dbReference>
<dbReference type="PANTHER" id="PTHR33515">
    <property type="entry name" value="RIBOSOME-BINDING FACTOR A, CHLOROPLASTIC-RELATED"/>
    <property type="match status" value="1"/>
</dbReference>
<dbReference type="PANTHER" id="PTHR33515:SF1">
    <property type="entry name" value="RIBOSOME-BINDING FACTOR A, CHLOROPLASTIC-RELATED"/>
    <property type="match status" value="1"/>
</dbReference>
<dbReference type="Pfam" id="PF02033">
    <property type="entry name" value="RBFA"/>
    <property type="match status" value="1"/>
</dbReference>
<dbReference type="SUPFAM" id="SSF89919">
    <property type="entry name" value="Ribosome-binding factor A, RbfA"/>
    <property type="match status" value="1"/>
</dbReference>
<comment type="function">
    <text evidence="1">One of several proteins that assist in the late maturation steps of the functional core of the 30S ribosomal subunit. Associates with free 30S ribosomal subunits (but not with 30S subunits that are part of 70S ribosomes or polysomes). Required for efficient processing of 16S rRNA. May interact with the 5'-terminal helix region of 16S rRNA.</text>
</comment>
<comment type="subunit">
    <text evidence="1">Monomer. Binds 30S ribosomal subunits, but not 50S ribosomal subunits or 70S ribosomes.</text>
</comment>
<comment type="subcellular location">
    <subcellularLocation>
        <location evidence="1">Cytoplasm</location>
    </subcellularLocation>
</comment>
<comment type="similarity">
    <text evidence="1">Belongs to the RbfA family.</text>
</comment>
<name>RBFA_BURCH</name>
<evidence type="ECO:0000255" key="1">
    <source>
        <dbReference type="HAMAP-Rule" id="MF_00003"/>
    </source>
</evidence>
<evidence type="ECO:0000256" key="2">
    <source>
        <dbReference type="SAM" id="MobiDB-lite"/>
    </source>
</evidence>
<gene>
    <name evidence="1" type="primary">rbfA</name>
    <name type="ordered locus">Bcen2424_1501</name>
</gene>
<protein>
    <recommendedName>
        <fullName evidence="1">Ribosome-binding factor A</fullName>
    </recommendedName>
</protein>
<accession>A0K6X6</accession>
<organism>
    <name type="scientific">Burkholderia cenocepacia (strain HI2424)</name>
    <dbReference type="NCBI Taxonomy" id="331272"/>
    <lineage>
        <taxon>Bacteria</taxon>
        <taxon>Pseudomonadati</taxon>
        <taxon>Pseudomonadota</taxon>
        <taxon>Betaproteobacteria</taxon>
        <taxon>Burkholderiales</taxon>
        <taxon>Burkholderiaceae</taxon>
        <taxon>Burkholderia</taxon>
        <taxon>Burkholderia cepacia complex</taxon>
    </lineage>
</organism>